<comment type="function">
    <text evidence="1">Contributes to K(+)/H(+) antiport activity by supporting proton efflux to control proton extrusion and homeostasis in chloroplasts in a light-dependent manner to modulate photosynthesis. Prevents excessive induction of non-photochemical quenching (NPQ) under continuous-light conditions. Indirectly promotes efficient inorganic carbon uptake into chloroplasts.</text>
</comment>
<comment type="catalytic activity">
    <reaction evidence="1">
        <text>K(+)(in) + H(+)(out) = K(+)(out) + H(+)(in)</text>
        <dbReference type="Rhea" id="RHEA:29467"/>
        <dbReference type="ChEBI" id="CHEBI:15378"/>
        <dbReference type="ChEBI" id="CHEBI:29103"/>
    </reaction>
</comment>
<comment type="subcellular location">
    <subcellularLocation>
        <location evidence="1">Plastid</location>
        <location evidence="1">Chloroplast inner membrane</location>
        <topology evidence="1">Multi-pass membrane protein</topology>
    </subcellularLocation>
</comment>
<comment type="similarity">
    <text evidence="1 2">Belongs to the CemA family.</text>
</comment>
<sequence length="229" mass="26920">MPKKKALTPFPYLASIVFLPWWISLSFTKSLEPWVTNWWNTGQSKTFLNDIQEKNVLERFIELEQLFLLDEMIKEYPETQIQKFHIGIHKETLQLVKMHNEDHIHIVLHFSTNIICFAILSGYYFLGNEELVILNSWVQEFLYNLSDTIKAFSILLVTDLCIGFHSPRGWELMIGSVYKDFGFAHNDQIISGLVSTFPVILDTILKYWIFHYLNRVSPSLVVIYHSMNE</sequence>
<evidence type="ECO:0000255" key="1">
    <source>
        <dbReference type="HAMAP-Rule" id="MF_01308"/>
    </source>
</evidence>
<evidence type="ECO:0000305" key="2"/>
<organism>
    <name type="scientific">Calycanthus floridus var. glaucus</name>
    <name type="common">Eastern sweetshrub</name>
    <name type="synonym">Calycanthus fertilis var. ferax</name>
    <dbReference type="NCBI Taxonomy" id="212734"/>
    <lineage>
        <taxon>Eukaryota</taxon>
        <taxon>Viridiplantae</taxon>
        <taxon>Streptophyta</taxon>
        <taxon>Embryophyta</taxon>
        <taxon>Tracheophyta</taxon>
        <taxon>Spermatophyta</taxon>
        <taxon>Magnoliopsida</taxon>
        <taxon>Magnoliidae</taxon>
        <taxon>Laurales</taxon>
        <taxon>Calycanthaceae</taxon>
        <taxon>Calycanthus</taxon>
    </lineage>
</organism>
<geneLocation type="chloroplast"/>
<gene>
    <name evidence="1" type="primary">cemA</name>
</gene>
<reference key="1">
    <citation type="journal article" date="2003" name="Plant Syst. Evol.">
        <title>The chloroplast genome of the 'basal' angiosperm Calycanthus fertilis -- structural and phylogenetic analyses.</title>
        <authorList>
            <person name="Goremykin V."/>
            <person name="Hirsch-Ernst K.I."/>
            <person name="Woelfl S."/>
            <person name="Hellwig F.H."/>
        </authorList>
    </citation>
    <scope>NUCLEOTIDE SEQUENCE [LARGE SCALE GENOMIC DNA]</scope>
</reference>
<feature type="chain" id="PRO_0000216635" description="Potassium/proton antiporter CemA">
    <location>
        <begin position="1"/>
        <end position="229"/>
    </location>
</feature>
<feature type="transmembrane region" description="Helical" evidence="1">
    <location>
        <begin position="7"/>
        <end position="27"/>
    </location>
</feature>
<feature type="transmembrane region" description="Helical" evidence="1">
    <location>
        <begin position="106"/>
        <end position="126"/>
    </location>
</feature>
<feature type="transmembrane region" description="Helical" evidence="1">
    <location>
        <begin position="189"/>
        <end position="209"/>
    </location>
</feature>
<dbReference type="EMBL" id="AJ428413">
    <property type="protein sequence ID" value="CAD28733.1"/>
    <property type="molecule type" value="Genomic_DNA"/>
</dbReference>
<dbReference type="RefSeq" id="NP_862766.1">
    <property type="nucleotide sequence ID" value="NC_004993.1"/>
</dbReference>
<dbReference type="GeneID" id="2597980"/>
<dbReference type="GO" id="GO:0009706">
    <property type="term" value="C:chloroplast inner membrane"/>
    <property type="evidence" value="ECO:0007669"/>
    <property type="project" value="UniProtKB-SubCell"/>
</dbReference>
<dbReference type="GO" id="GO:0015297">
    <property type="term" value="F:antiporter activity"/>
    <property type="evidence" value="ECO:0007669"/>
    <property type="project" value="UniProtKB-KW"/>
</dbReference>
<dbReference type="GO" id="GO:0015078">
    <property type="term" value="F:proton transmembrane transporter activity"/>
    <property type="evidence" value="ECO:0007669"/>
    <property type="project" value="UniProtKB-UniRule"/>
</dbReference>
<dbReference type="GO" id="GO:0006813">
    <property type="term" value="P:potassium ion transport"/>
    <property type="evidence" value="ECO:0007669"/>
    <property type="project" value="UniProtKB-UniRule"/>
</dbReference>
<dbReference type="HAMAP" id="MF_01308">
    <property type="entry name" value="CemA_PxcA"/>
    <property type="match status" value="1"/>
</dbReference>
<dbReference type="InterPro" id="IPR004282">
    <property type="entry name" value="CemA"/>
</dbReference>
<dbReference type="PANTHER" id="PTHR33650:SF2">
    <property type="entry name" value="CHLOROPLAST ENVELOPE MEMBRANE PROTEIN"/>
    <property type="match status" value="1"/>
</dbReference>
<dbReference type="PANTHER" id="PTHR33650">
    <property type="entry name" value="CHLOROPLAST ENVELOPE MEMBRANE PROTEIN-RELATED"/>
    <property type="match status" value="1"/>
</dbReference>
<dbReference type="Pfam" id="PF03040">
    <property type="entry name" value="CemA"/>
    <property type="match status" value="1"/>
</dbReference>
<keyword id="KW-0050">Antiport</keyword>
<keyword id="KW-0150">Chloroplast</keyword>
<keyword id="KW-0375">Hydrogen ion transport</keyword>
<keyword id="KW-0406">Ion transport</keyword>
<keyword id="KW-0472">Membrane</keyword>
<keyword id="KW-0934">Plastid</keyword>
<keyword id="KW-1001">Plastid inner membrane</keyword>
<keyword id="KW-0630">Potassium</keyword>
<keyword id="KW-0633">Potassium transport</keyword>
<keyword id="KW-0812">Transmembrane</keyword>
<keyword id="KW-1133">Transmembrane helix</keyword>
<keyword id="KW-0813">Transport</keyword>
<protein>
    <recommendedName>
        <fullName evidence="1">Potassium/proton antiporter CemA</fullName>
    </recommendedName>
    <alternativeName>
        <fullName evidence="1">Chloroplast envelope membrane protein A</fullName>
        <shortName evidence="1">CemA</shortName>
    </alternativeName>
</protein>
<accession>Q7YJW1</accession>
<name>CEMA_CALFG</name>
<proteinExistence type="inferred from homology"/>